<evidence type="ECO:0000250" key="1">
    <source>
        <dbReference type="UniProtKB" id="P84077"/>
    </source>
</evidence>
<evidence type="ECO:0000250" key="2">
    <source>
        <dbReference type="UniProtKB" id="P84080"/>
    </source>
</evidence>
<evidence type="ECO:0000250" key="3">
    <source>
        <dbReference type="UniProtKB" id="Q7KQL3"/>
    </source>
</evidence>
<evidence type="ECO:0000250" key="4">
    <source>
        <dbReference type="UniProtKB" id="Q94650"/>
    </source>
</evidence>
<evidence type="ECO:0000305" key="5"/>
<protein>
    <recommendedName>
        <fullName>ADP-ribosylation factor 1</fullName>
        <ecNumber evidence="3">3.6.5.2</ecNumber>
    </recommendedName>
</protein>
<reference key="1">
    <citation type="submission" date="1995-11" db="EMBL/GenBank/DDBJ databases">
        <authorList>
            <person name="Lee F.-J.S."/>
            <person name="Chiang S."/>
        </authorList>
    </citation>
    <scope>NUCLEOTIDE SEQUENCE [MRNA]</scope>
</reference>
<name>ARF1_PLAFO</name>
<keyword id="KW-0931">ER-Golgi transport</keyword>
<keyword id="KW-0333">Golgi apparatus</keyword>
<keyword id="KW-0342">GTP-binding</keyword>
<keyword id="KW-0378">Hydrolase</keyword>
<keyword id="KW-0449">Lipoprotein</keyword>
<keyword id="KW-0472">Membrane</keyword>
<keyword id="KW-0519">Myristate</keyword>
<keyword id="KW-0547">Nucleotide-binding</keyword>
<keyword id="KW-0653">Protein transport</keyword>
<keyword id="KW-0813">Transport</keyword>
<sequence length="181" mass="20840">MGLYVSRLFNRLFQKKDVRILMVGLDAAGKTTILYKVKLGEVVTTIPTIGFNVETVEFRNISFTVWDVGGQDKIRPLWRHYYSNTDGLIFVVDSNDRERIDDAREGLHRMINEEELKDAIILVFANKQDLPNAMSAAEVTEKLHLNTIRERNWFIQSTCATRGDGLYEGFDWLTTHLNNAK</sequence>
<proteinExistence type="evidence at transcript level"/>
<dbReference type="EC" id="3.6.5.2" evidence="3"/>
<dbReference type="EMBL" id="U40228">
    <property type="protein sequence ID" value="AAB03195.1"/>
    <property type="molecule type" value="mRNA"/>
</dbReference>
<dbReference type="SMR" id="Q25761"/>
<dbReference type="GO" id="GO:0000139">
    <property type="term" value="C:Golgi membrane"/>
    <property type="evidence" value="ECO:0007669"/>
    <property type="project" value="UniProtKB-SubCell"/>
</dbReference>
<dbReference type="GO" id="GO:0005525">
    <property type="term" value="F:GTP binding"/>
    <property type="evidence" value="ECO:0007669"/>
    <property type="project" value="UniProtKB-KW"/>
</dbReference>
<dbReference type="GO" id="GO:0003924">
    <property type="term" value="F:GTPase activity"/>
    <property type="evidence" value="ECO:0007669"/>
    <property type="project" value="InterPro"/>
</dbReference>
<dbReference type="GO" id="GO:0015031">
    <property type="term" value="P:protein transport"/>
    <property type="evidence" value="ECO:0007669"/>
    <property type="project" value="UniProtKB-KW"/>
</dbReference>
<dbReference type="GO" id="GO:0016192">
    <property type="term" value="P:vesicle-mediated transport"/>
    <property type="evidence" value="ECO:0007669"/>
    <property type="project" value="UniProtKB-KW"/>
</dbReference>
<dbReference type="CDD" id="cd04150">
    <property type="entry name" value="Arf1_5_like"/>
    <property type="match status" value="1"/>
</dbReference>
<dbReference type="FunFam" id="3.40.50.300:FF:000024">
    <property type="entry name" value="ADP-ribosylation factor 1"/>
    <property type="match status" value="1"/>
</dbReference>
<dbReference type="Gene3D" id="3.40.50.300">
    <property type="entry name" value="P-loop containing nucleotide triphosphate hydrolases"/>
    <property type="match status" value="1"/>
</dbReference>
<dbReference type="InterPro" id="IPR045872">
    <property type="entry name" value="Arf1-5-like"/>
</dbReference>
<dbReference type="InterPro" id="IPR027417">
    <property type="entry name" value="P-loop_NTPase"/>
</dbReference>
<dbReference type="InterPro" id="IPR005225">
    <property type="entry name" value="Small_GTP-bd"/>
</dbReference>
<dbReference type="InterPro" id="IPR024156">
    <property type="entry name" value="Small_GTPase_ARF"/>
</dbReference>
<dbReference type="InterPro" id="IPR006689">
    <property type="entry name" value="Small_GTPase_ARF/SAR"/>
</dbReference>
<dbReference type="NCBIfam" id="TIGR00231">
    <property type="entry name" value="small_GTP"/>
    <property type="match status" value="1"/>
</dbReference>
<dbReference type="PANTHER" id="PTHR11711">
    <property type="entry name" value="ADP RIBOSYLATION FACTOR-RELATED"/>
    <property type="match status" value="1"/>
</dbReference>
<dbReference type="Pfam" id="PF00025">
    <property type="entry name" value="Arf"/>
    <property type="match status" value="1"/>
</dbReference>
<dbReference type="PRINTS" id="PR00328">
    <property type="entry name" value="SAR1GTPBP"/>
</dbReference>
<dbReference type="SMART" id="SM00177">
    <property type="entry name" value="ARF"/>
    <property type="match status" value="1"/>
</dbReference>
<dbReference type="SMART" id="SM00175">
    <property type="entry name" value="RAB"/>
    <property type="match status" value="1"/>
</dbReference>
<dbReference type="SMART" id="SM00178">
    <property type="entry name" value="SAR"/>
    <property type="match status" value="1"/>
</dbReference>
<dbReference type="SUPFAM" id="SSF52540">
    <property type="entry name" value="P-loop containing nucleoside triphosphate hydrolases"/>
    <property type="match status" value="1"/>
</dbReference>
<dbReference type="PROSITE" id="PS51417">
    <property type="entry name" value="ARF"/>
    <property type="match status" value="1"/>
</dbReference>
<feature type="initiator methionine" description="Removed" evidence="1">
    <location>
        <position position="1"/>
    </location>
</feature>
<feature type="chain" id="PRO_0000207425" description="ADP-ribosylation factor 1">
    <location>
        <begin position="2"/>
        <end position="181"/>
    </location>
</feature>
<feature type="binding site" evidence="3">
    <location>
        <begin position="24"/>
        <end position="31"/>
    </location>
    <ligand>
        <name>GTP</name>
        <dbReference type="ChEBI" id="CHEBI:37565"/>
    </ligand>
</feature>
<feature type="binding site" evidence="3">
    <location>
        <begin position="126"/>
        <end position="129"/>
    </location>
    <ligand>
        <name>GTP</name>
        <dbReference type="ChEBI" id="CHEBI:37565"/>
    </ligand>
</feature>
<feature type="binding site" evidence="3">
    <location>
        <position position="160"/>
    </location>
    <ligand>
        <name>GTP</name>
        <dbReference type="ChEBI" id="CHEBI:37565"/>
    </ligand>
</feature>
<feature type="lipid moiety-binding region" description="N-myristoyl glycine" evidence="1">
    <location>
        <position position="2"/>
    </location>
</feature>
<gene>
    <name type="primary">ARF1</name>
</gene>
<organism>
    <name type="scientific">Plasmodium falciparum (isolate NF54)</name>
    <dbReference type="NCBI Taxonomy" id="5843"/>
    <lineage>
        <taxon>Eukaryota</taxon>
        <taxon>Sar</taxon>
        <taxon>Alveolata</taxon>
        <taxon>Apicomplexa</taxon>
        <taxon>Aconoidasida</taxon>
        <taxon>Haemosporida</taxon>
        <taxon>Plasmodiidae</taxon>
        <taxon>Plasmodium</taxon>
        <taxon>Plasmodium (Laverania)</taxon>
    </lineage>
</organism>
<comment type="function">
    <text evidence="1 3">Small GTPase involved in protein trafficking between different compartments (By similarity). Modulates vesicle budding and uncoating within the Golgi complex. In its GTP-bound form, triggers the recruitment of coatomer proteins to the Golgi membrane. The hydrolysis of ARF1-bound GTP, which is mediated by ARFGAPs proteins, is required for dissociation of coat proteins from Golgi membranes and vesicles (By similarity). Regulates the transport of N-acylated AK2 to the parasitophorous vacuole membrane. May be involved in the activation of lipid kinase PIP5K (By similarity).</text>
</comment>
<comment type="catalytic activity">
    <reaction evidence="3">
        <text>GTP + H2O = GDP + phosphate + H(+)</text>
        <dbReference type="Rhea" id="RHEA:19669"/>
        <dbReference type="ChEBI" id="CHEBI:15377"/>
        <dbReference type="ChEBI" id="CHEBI:15378"/>
        <dbReference type="ChEBI" id="CHEBI:37565"/>
        <dbReference type="ChEBI" id="CHEBI:43474"/>
        <dbReference type="ChEBI" id="CHEBI:58189"/>
        <dbReference type="EC" id="3.6.5.2"/>
    </reaction>
</comment>
<comment type="activity regulation">
    <text evidence="3 4">Alternates between an inactive GDP-bound form and an active GTP-bound form (By similarity). Intrinsic GTPase activity is almost undetectable in vitro (By similarity). Activated by a guanine nucleotide-exchange factor (GEF) and inactivated by GTPase-activating protein ARFGAP1 (By similarity).</text>
</comment>
<comment type="subunit">
    <text evidence="3">May interact with GTPase RAB5b.</text>
</comment>
<comment type="subcellular location">
    <subcellularLocation>
        <location evidence="3">Golgi apparatus membrane</location>
        <topology evidence="1">Lipid-anchor</topology>
        <orientation evidence="3">Cytoplasmic side</orientation>
    </subcellularLocation>
    <text evidence="2">In the GDP-bound form, associates transiently with the membranes via its myristoylated N-terminus where guanine nucleotide-exchange factor (GEF)-mediated nucleotide exchange occurs. Following nucleotide exchange, the GTP-bound form undergoes a conformational change, leading to the exposure of a myristoylated N-terminal amphipathic helix that provides stable membrane anchorage.</text>
</comment>
<comment type="similarity">
    <text evidence="5">Belongs to the small GTPase superfamily. Arf family.</text>
</comment>
<accession>Q25761</accession>